<accession>Q4UNV9</accession>
<comment type="function">
    <text evidence="1">Catalyzes the decarboxylation of orotidine 5'-monophosphate (OMP) to uridine 5'-monophosphate (UMP).</text>
</comment>
<comment type="catalytic activity">
    <reaction evidence="1">
        <text>orotidine 5'-phosphate + H(+) = UMP + CO2</text>
        <dbReference type="Rhea" id="RHEA:11596"/>
        <dbReference type="ChEBI" id="CHEBI:15378"/>
        <dbReference type="ChEBI" id="CHEBI:16526"/>
        <dbReference type="ChEBI" id="CHEBI:57538"/>
        <dbReference type="ChEBI" id="CHEBI:57865"/>
        <dbReference type="EC" id="4.1.1.23"/>
    </reaction>
</comment>
<comment type="pathway">
    <text evidence="1">Pyrimidine metabolism; UMP biosynthesis via de novo pathway; UMP from orotate: step 2/2.</text>
</comment>
<comment type="subunit">
    <text evidence="1">Homodimer.</text>
</comment>
<comment type="similarity">
    <text evidence="1">Belongs to the OMP decarboxylase family. Type 1 subfamily.</text>
</comment>
<reference key="1">
    <citation type="journal article" date="2005" name="Genome Res.">
        <title>Comparative and functional genomic analyses of the pathogenicity of phytopathogen Xanthomonas campestris pv. campestris.</title>
        <authorList>
            <person name="Qian W."/>
            <person name="Jia Y."/>
            <person name="Ren S.-X."/>
            <person name="He Y.-Q."/>
            <person name="Feng J.-X."/>
            <person name="Lu L.-F."/>
            <person name="Sun Q."/>
            <person name="Ying G."/>
            <person name="Tang D.-J."/>
            <person name="Tang H."/>
            <person name="Wu W."/>
            <person name="Hao P."/>
            <person name="Wang L."/>
            <person name="Jiang B.-L."/>
            <person name="Zeng S."/>
            <person name="Gu W.-Y."/>
            <person name="Lu G."/>
            <person name="Rong L."/>
            <person name="Tian Y."/>
            <person name="Yao Z."/>
            <person name="Fu G."/>
            <person name="Chen B."/>
            <person name="Fang R."/>
            <person name="Qiang B."/>
            <person name="Chen Z."/>
            <person name="Zhao G.-P."/>
            <person name="Tang J.-L."/>
            <person name="He C."/>
        </authorList>
    </citation>
    <scope>NUCLEOTIDE SEQUENCE [LARGE SCALE GENOMIC DNA]</scope>
    <source>
        <strain>8004</strain>
    </source>
</reference>
<name>PYRF_XANC8</name>
<proteinExistence type="inferred from homology"/>
<keyword id="KW-0210">Decarboxylase</keyword>
<keyword id="KW-0456">Lyase</keyword>
<keyword id="KW-0665">Pyrimidine biosynthesis</keyword>
<organism>
    <name type="scientific">Xanthomonas campestris pv. campestris (strain 8004)</name>
    <dbReference type="NCBI Taxonomy" id="314565"/>
    <lineage>
        <taxon>Bacteria</taxon>
        <taxon>Pseudomonadati</taxon>
        <taxon>Pseudomonadota</taxon>
        <taxon>Gammaproteobacteria</taxon>
        <taxon>Lysobacterales</taxon>
        <taxon>Lysobacteraceae</taxon>
        <taxon>Xanthomonas</taxon>
    </lineage>
</organism>
<sequence length="243" mass="25688">MNRPPLPLAAHDRLIFALDVPGHDEAIAWVDRLGESVAFYKIGMELLASGEYFHVLDALAKRNKRVFVDLKFFDIPATVAGTIRRLSQWPVSYCTVHGWHAGMLEAAAAANQGDMRLLAVTVLTSMGRPDLAAMGIDREPVDVVVERALAAQAAGIDGVIASGQEAGMIRRATGPAFSIVCPGIRPGGPVGDDQQRTVGVAQAFADGADAIVVGRPIRLANDPAAAAAAIQAEIRAAVVQHRD</sequence>
<gene>
    <name evidence="1" type="primary">pyrF</name>
    <name type="ordered locus">XC_4226</name>
</gene>
<evidence type="ECO:0000255" key="1">
    <source>
        <dbReference type="HAMAP-Rule" id="MF_01200"/>
    </source>
</evidence>
<feature type="chain" id="PRO_0000241930" description="Orotidine 5'-phosphate decarboxylase">
    <location>
        <begin position="1"/>
        <end position="243"/>
    </location>
</feature>
<feature type="active site" description="Proton donor" evidence="1">
    <location>
        <position position="71"/>
    </location>
</feature>
<feature type="binding site" evidence="1">
    <location>
        <position position="19"/>
    </location>
    <ligand>
        <name>substrate</name>
    </ligand>
</feature>
<feature type="binding site" evidence="1">
    <location>
        <position position="41"/>
    </location>
    <ligand>
        <name>substrate</name>
    </ligand>
</feature>
<feature type="binding site" evidence="1">
    <location>
        <begin position="69"/>
        <end position="78"/>
    </location>
    <ligand>
        <name>substrate</name>
    </ligand>
</feature>
<feature type="binding site" evidence="1">
    <location>
        <position position="124"/>
    </location>
    <ligand>
        <name>substrate</name>
    </ligand>
</feature>
<feature type="binding site" evidence="1">
    <location>
        <position position="185"/>
    </location>
    <ligand>
        <name>substrate</name>
    </ligand>
</feature>
<feature type="binding site" evidence="1">
    <location>
        <position position="194"/>
    </location>
    <ligand>
        <name>substrate</name>
    </ligand>
</feature>
<feature type="binding site" evidence="1">
    <location>
        <position position="214"/>
    </location>
    <ligand>
        <name>substrate</name>
    </ligand>
</feature>
<feature type="binding site" evidence="1">
    <location>
        <position position="215"/>
    </location>
    <ligand>
        <name>substrate</name>
    </ligand>
</feature>
<dbReference type="EC" id="4.1.1.23" evidence="1"/>
<dbReference type="EMBL" id="CP000050">
    <property type="protein sequence ID" value="AAY51264.1"/>
    <property type="molecule type" value="Genomic_DNA"/>
</dbReference>
<dbReference type="RefSeq" id="WP_011039203.1">
    <property type="nucleotide sequence ID" value="NZ_CP155948.1"/>
</dbReference>
<dbReference type="SMR" id="Q4UNV9"/>
<dbReference type="KEGG" id="xcb:XC_4226"/>
<dbReference type="HOGENOM" id="CLU_067069_1_0_6"/>
<dbReference type="UniPathway" id="UPA00070">
    <property type="reaction ID" value="UER00120"/>
</dbReference>
<dbReference type="Proteomes" id="UP000000420">
    <property type="component" value="Chromosome"/>
</dbReference>
<dbReference type="GO" id="GO:0005829">
    <property type="term" value="C:cytosol"/>
    <property type="evidence" value="ECO:0007669"/>
    <property type="project" value="TreeGrafter"/>
</dbReference>
<dbReference type="GO" id="GO:0004590">
    <property type="term" value="F:orotidine-5'-phosphate decarboxylase activity"/>
    <property type="evidence" value="ECO:0007669"/>
    <property type="project" value="UniProtKB-UniRule"/>
</dbReference>
<dbReference type="GO" id="GO:0006207">
    <property type="term" value="P:'de novo' pyrimidine nucleobase biosynthetic process"/>
    <property type="evidence" value="ECO:0007669"/>
    <property type="project" value="InterPro"/>
</dbReference>
<dbReference type="GO" id="GO:0044205">
    <property type="term" value="P:'de novo' UMP biosynthetic process"/>
    <property type="evidence" value="ECO:0007669"/>
    <property type="project" value="UniProtKB-UniRule"/>
</dbReference>
<dbReference type="CDD" id="cd04725">
    <property type="entry name" value="OMP_decarboxylase_like"/>
    <property type="match status" value="1"/>
</dbReference>
<dbReference type="FunFam" id="3.20.20.70:FF:000235">
    <property type="entry name" value="Orotidine 5'-phosphate decarboxylase"/>
    <property type="match status" value="1"/>
</dbReference>
<dbReference type="Gene3D" id="3.20.20.70">
    <property type="entry name" value="Aldolase class I"/>
    <property type="match status" value="1"/>
</dbReference>
<dbReference type="HAMAP" id="MF_01200_B">
    <property type="entry name" value="OMPdecase_type1_B"/>
    <property type="match status" value="1"/>
</dbReference>
<dbReference type="InterPro" id="IPR013785">
    <property type="entry name" value="Aldolase_TIM"/>
</dbReference>
<dbReference type="InterPro" id="IPR014732">
    <property type="entry name" value="OMPdecase"/>
</dbReference>
<dbReference type="InterPro" id="IPR018089">
    <property type="entry name" value="OMPdecase_AS"/>
</dbReference>
<dbReference type="InterPro" id="IPR047596">
    <property type="entry name" value="OMPdecase_bac"/>
</dbReference>
<dbReference type="InterPro" id="IPR001754">
    <property type="entry name" value="OMPdeCOase_dom"/>
</dbReference>
<dbReference type="InterPro" id="IPR011060">
    <property type="entry name" value="RibuloseP-bd_barrel"/>
</dbReference>
<dbReference type="NCBIfam" id="NF001273">
    <property type="entry name" value="PRK00230.1"/>
    <property type="match status" value="1"/>
</dbReference>
<dbReference type="NCBIfam" id="TIGR01740">
    <property type="entry name" value="pyrF"/>
    <property type="match status" value="1"/>
</dbReference>
<dbReference type="PANTHER" id="PTHR32119">
    <property type="entry name" value="OROTIDINE 5'-PHOSPHATE DECARBOXYLASE"/>
    <property type="match status" value="1"/>
</dbReference>
<dbReference type="PANTHER" id="PTHR32119:SF2">
    <property type="entry name" value="OROTIDINE 5'-PHOSPHATE DECARBOXYLASE"/>
    <property type="match status" value="1"/>
</dbReference>
<dbReference type="Pfam" id="PF00215">
    <property type="entry name" value="OMPdecase"/>
    <property type="match status" value="1"/>
</dbReference>
<dbReference type="SMART" id="SM00934">
    <property type="entry name" value="OMPdecase"/>
    <property type="match status" value="1"/>
</dbReference>
<dbReference type="SUPFAM" id="SSF51366">
    <property type="entry name" value="Ribulose-phoshate binding barrel"/>
    <property type="match status" value="1"/>
</dbReference>
<dbReference type="PROSITE" id="PS00156">
    <property type="entry name" value="OMPDECASE"/>
    <property type="match status" value="1"/>
</dbReference>
<protein>
    <recommendedName>
        <fullName evidence="1">Orotidine 5'-phosphate decarboxylase</fullName>
        <ecNumber evidence="1">4.1.1.23</ecNumber>
    </recommendedName>
    <alternativeName>
        <fullName evidence="1">OMP decarboxylase</fullName>
        <shortName evidence="1">OMPDCase</shortName>
        <shortName evidence="1">OMPdecase</shortName>
    </alternativeName>
</protein>